<comment type="function">
    <text evidence="1">Required for the first step of histidine biosynthesis. May allow the feedback regulation of ATP phosphoribosyltransferase activity by histidine.</text>
</comment>
<comment type="pathway">
    <text evidence="1">Amino-acid biosynthesis; L-histidine biosynthesis; L-histidine from 5-phospho-alpha-D-ribose 1-diphosphate: step 1/9.</text>
</comment>
<comment type="subunit">
    <text evidence="1">Heteromultimer composed of HisG and HisZ subunits.</text>
</comment>
<comment type="subcellular location">
    <subcellularLocation>
        <location evidence="1">Cytoplasm</location>
    </subcellularLocation>
</comment>
<comment type="miscellaneous">
    <text>This function is generally fulfilled by the C-terminal part of HisG, which is missing in some bacteria such as this one.</text>
</comment>
<comment type="similarity">
    <text evidence="1">Belongs to the class-II aminoacyl-tRNA synthetase family. HisZ subfamily.</text>
</comment>
<protein>
    <recommendedName>
        <fullName evidence="1">ATP phosphoribosyltransferase regulatory subunit</fullName>
    </recommendedName>
</protein>
<dbReference type="EMBL" id="CP000001">
    <property type="protein sequence ID" value="AAU18959.1"/>
    <property type="molecule type" value="Genomic_DNA"/>
</dbReference>
<dbReference type="RefSeq" id="WP_000170322.1">
    <property type="nucleotide sequence ID" value="NC_006274.1"/>
</dbReference>
<dbReference type="SMR" id="Q63DX4"/>
<dbReference type="KEGG" id="bcz:BCE33L1289"/>
<dbReference type="PATRIC" id="fig|288681.22.peg.4265"/>
<dbReference type="UniPathway" id="UPA00031">
    <property type="reaction ID" value="UER00006"/>
</dbReference>
<dbReference type="Proteomes" id="UP000002612">
    <property type="component" value="Chromosome"/>
</dbReference>
<dbReference type="GO" id="GO:0005737">
    <property type="term" value="C:cytoplasm"/>
    <property type="evidence" value="ECO:0007669"/>
    <property type="project" value="UniProtKB-SubCell"/>
</dbReference>
<dbReference type="GO" id="GO:0140096">
    <property type="term" value="F:catalytic activity, acting on a protein"/>
    <property type="evidence" value="ECO:0007669"/>
    <property type="project" value="UniProtKB-ARBA"/>
</dbReference>
<dbReference type="GO" id="GO:0004821">
    <property type="term" value="F:histidine-tRNA ligase activity"/>
    <property type="evidence" value="ECO:0007669"/>
    <property type="project" value="TreeGrafter"/>
</dbReference>
<dbReference type="GO" id="GO:0016740">
    <property type="term" value="F:transferase activity"/>
    <property type="evidence" value="ECO:0007669"/>
    <property type="project" value="UniProtKB-ARBA"/>
</dbReference>
<dbReference type="GO" id="GO:0006427">
    <property type="term" value="P:histidyl-tRNA aminoacylation"/>
    <property type="evidence" value="ECO:0007669"/>
    <property type="project" value="TreeGrafter"/>
</dbReference>
<dbReference type="GO" id="GO:0000105">
    <property type="term" value="P:L-histidine biosynthetic process"/>
    <property type="evidence" value="ECO:0007669"/>
    <property type="project" value="UniProtKB-UniRule"/>
</dbReference>
<dbReference type="CDD" id="cd00773">
    <property type="entry name" value="HisRS-like_core"/>
    <property type="match status" value="1"/>
</dbReference>
<dbReference type="FunFam" id="3.30.930.10:FF:000060">
    <property type="entry name" value="ATP phosphoribosyltransferase regulatory subunit"/>
    <property type="match status" value="1"/>
</dbReference>
<dbReference type="Gene3D" id="3.30.930.10">
    <property type="entry name" value="Bira Bifunctional Protein, Domain 2"/>
    <property type="match status" value="1"/>
</dbReference>
<dbReference type="HAMAP" id="MF_00125">
    <property type="entry name" value="HisZ"/>
    <property type="match status" value="1"/>
</dbReference>
<dbReference type="InterPro" id="IPR006195">
    <property type="entry name" value="aa-tRNA-synth_II"/>
</dbReference>
<dbReference type="InterPro" id="IPR045864">
    <property type="entry name" value="aa-tRNA-synth_II/BPL/LPL"/>
</dbReference>
<dbReference type="InterPro" id="IPR041715">
    <property type="entry name" value="HisRS-like_core"/>
</dbReference>
<dbReference type="InterPro" id="IPR004516">
    <property type="entry name" value="HisRS/HisZ"/>
</dbReference>
<dbReference type="InterPro" id="IPR004517">
    <property type="entry name" value="HisZ"/>
</dbReference>
<dbReference type="NCBIfam" id="TIGR00443">
    <property type="entry name" value="hisZ_biosyn_reg"/>
    <property type="match status" value="1"/>
</dbReference>
<dbReference type="NCBIfam" id="NF008938">
    <property type="entry name" value="PRK12292.1-6"/>
    <property type="match status" value="1"/>
</dbReference>
<dbReference type="PANTHER" id="PTHR43707:SF6">
    <property type="entry name" value="ATP PHOSPHORIBOSYLTRANSFERASE REGULATORY SUBUNIT"/>
    <property type="match status" value="1"/>
</dbReference>
<dbReference type="PANTHER" id="PTHR43707">
    <property type="entry name" value="HISTIDYL-TRNA SYNTHETASE"/>
    <property type="match status" value="1"/>
</dbReference>
<dbReference type="Pfam" id="PF13393">
    <property type="entry name" value="tRNA-synt_His"/>
    <property type="match status" value="1"/>
</dbReference>
<dbReference type="PIRSF" id="PIRSF001549">
    <property type="entry name" value="His-tRNA_synth"/>
    <property type="match status" value="1"/>
</dbReference>
<dbReference type="SUPFAM" id="SSF55681">
    <property type="entry name" value="Class II aaRS and biotin synthetases"/>
    <property type="match status" value="1"/>
</dbReference>
<dbReference type="PROSITE" id="PS50862">
    <property type="entry name" value="AA_TRNA_LIGASE_II"/>
    <property type="match status" value="1"/>
</dbReference>
<accession>Q63DX4</accession>
<gene>
    <name evidence="1" type="primary">hisZ</name>
    <name type="ordered locus">BCE33L1289</name>
</gene>
<sequence length="420" mass="48800">MTKWKRANPNGTRDYLFEECTLIEEVEQKLRRTFLERGYEEIRTPTIEFYDVFAFQSRPIDEEKMYKFFDEKGRIIVLRPDMTIPLARVMGTQRCDTPLKVTYSGNVFRANESLAGKYNEIVQSGIEVIGIDNVRAEIECVISVIQSLQKLKVQSFTIEIGQVQLYKCIVKKLSIHEEEEKVLRTYIESKNYAALSNFIRDKKLDRCDETVKLLEKLPRLFGNLEVIEEAEKLASSNEMKMAITRVKEIYEAIEKLGYGSYISIDLGMIQHLDYYTGVIFKGYIYEIGEEIVSGGRYDELIGNFGEMLPAVGLAVQVNQIVKALQEQQEPYERKRIDIMIHYELNRLAEAERLRNLLQKDGKKVALSLFSNLNDTFQFARKNQIVTVVEAKSESLVEYVWKEKWVVQKEGETSCVTFKLR</sequence>
<name>HISZ_BACCZ</name>
<organism>
    <name type="scientific">Bacillus cereus (strain ZK / E33L)</name>
    <dbReference type="NCBI Taxonomy" id="288681"/>
    <lineage>
        <taxon>Bacteria</taxon>
        <taxon>Bacillati</taxon>
        <taxon>Bacillota</taxon>
        <taxon>Bacilli</taxon>
        <taxon>Bacillales</taxon>
        <taxon>Bacillaceae</taxon>
        <taxon>Bacillus</taxon>
        <taxon>Bacillus cereus group</taxon>
    </lineage>
</organism>
<proteinExistence type="inferred from homology"/>
<evidence type="ECO:0000255" key="1">
    <source>
        <dbReference type="HAMAP-Rule" id="MF_00125"/>
    </source>
</evidence>
<reference key="1">
    <citation type="journal article" date="2006" name="J. Bacteriol.">
        <title>Pathogenomic sequence analysis of Bacillus cereus and Bacillus thuringiensis isolates closely related to Bacillus anthracis.</title>
        <authorList>
            <person name="Han C.S."/>
            <person name="Xie G."/>
            <person name="Challacombe J.F."/>
            <person name="Altherr M.R."/>
            <person name="Bhotika S.S."/>
            <person name="Bruce D."/>
            <person name="Campbell C.S."/>
            <person name="Campbell M.L."/>
            <person name="Chen J."/>
            <person name="Chertkov O."/>
            <person name="Cleland C."/>
            <person name="Dimitrijevic M."/>
            <person name="Doggett N.A."/>
            <person name="Fawcett J.J."/>
            <person name="Glavina T."/>
            <person name="Goodwin L.A."/>
            <person name="Hill K.K."/>
            <person name="Hitchcock P."/>
            <person name="Jackson P.J."/>
            <person name="Keim P."/>
            <person name="Kewalramani A.R."/>
            <person name="Longmire J."/>
            <person name="Lucas S."/>
            <person name="Malfatti S."/>
            <person name="McMurry K."/>
            <person name="Meincke L.J."/>
            <person name="Misra M."/>
            <person name="Moseman B.L."/>
            <person name="Mundt M."/>
            <person name="Munk A.C."/>
            <person name="Okinaka R.T."/>
            <person name="Parson-Quintana B."/>
            <person name="Reilly L.P."/>
            <person name="Richardson P."/>
            <person name="Robinson D.L."/>
            <person name="Rubin E."/>
            <person name="Saunders E."/>
            <person name="Tapia R."/>
            <person name="Tesmer J.G."/>
            <person name="Thayer N."/>
            <person name="Thompson L.S."/>
            <person name="Tice H."/>
            <person name="Ticknor L.O."/>
            <person name="Wills P.L."/>
            <person name="Brettin T.S."/>
            <person name="Gilna P."/>
        </authorList>
    </citation>
    <scope>NUCLEOTIDE SEQUENCE [LARGE SCALE GENOMIC DNA]</scope>
    <source>
        <strain>ZK / E33L</strain>
    </source>
</reference>
<feature type="chain" id="PRO_0000242819" description="ATP phosphoribosyltransferase regulatory subunit">
    <location>
        <begin position="1"/>
        <end position="420"/>
    </location>
</feature>
<keyword id="KW-0028">Amino-acid biosynthesis</keyword>
<keyword id="KW-0963">Cytoplasm</keyword>
<keyword id="KW-0368">Histidine biosynthesis</keyword>